<protein>
    <recommendedName>
        <fullName evidence="15">Transcription factor 7</fullName>
        <shortName evidence="14">TCF-7</shortName>
    </recommendedName>
    <alternativeName>
        <fullName evidence="13">T-cell-specific transcription factor 1</fullName>
        <shortName evidence="13">T-cell factor 1</shortName>
    </alternativeName>
</protein>
<gene>
    <name evidence="15" type="primary">Tcf7</name>
    <name evidence="13" type="synonym">Tcf-1</name>
    <name evidence="12" type="synonym">Tcf1</name>
</gene>
<accession>Q00417</accession>
<comment type="function">
    <text evidence="1 7 8 9 11">Transcriptional activator involved in T-cell lymphocyte differentiation. Necessary for the survival of CD4(+) CD8(+) immature thymocytes. Isoforms lacking the N-terminal CTNNB1 binding domain cannot fulfill this role. Binds to the T-lymphocyte-specific enhancer element (5'-WWCAAAG-3') found in the promoter of the CD3E gene. Represses expression of the T-cell receptor gamma gene in alpha-beta T-cell lineages (PubMed:17218525). Inhibits the developmental program of IL17A effector gamma-delta T-cell subsets via regulating the transcription of T-cell lineage effector proteins (PubMed:23562159, PubMed:30413363). Required for the development of natural killer receptor-positive lymphoid tissue inducer T-cells (PubMed:23562159). TLE1, TLE2, TLE3 and TLE4 repress transactivation mediated by TCF7 and CTNNB1 (By similarity). May also act as feedback transcriptional repressor of CTNNB1 and TCF7L2 target genes.</text>
</comment>
<comment type="subunit">
    <text evidence="2">Binds the armadillo repeat of CTNNB1 and forms a stable complex (By similarity). Binds TLE5, TLE1, TLE2, TLE3 and TLE4 (By similarity). Interacts with MLLT11 (By similarity). Interacts with DAZAP2 (By similarity).</text>
</comment>
<comment type="subunit">
    <molecule>Isoform 2</molecule>
    <text evidence="8">Interacts (via N-terminus) with SOX13; inhibits WNT-mediated transcriptional activity.</text>
</comment>
<comment type="subcellular location">
    <subcellularLocation>
        <location>Nucleus</location>
    </subcellularLocation>
</comment>
<comment type="alternative products">
    <event type="alternative promoter"/>
    <isoform>
        <id>Q00417-1</id>
        <name>2</name>
        <sequence type="displayed"/>
    </isoform>
    <isoform>
        <id>Q00417-2</id>
        <name>1</name>
        <sequence type="described" ref="VSP_014963"/>
    </isoform>
    <text>Additional isoforms seem to exist.</text>
</comment>
<comment type="tissue specificity">
    <text evidence="8 9">T-cell specific. Expressed in triple negative 2 subpopulations of T-cells and both the gamma-delta and alpha-beta T-cell lineages (PubMed:17218525). Expressed in Il7 receptor positive innate-like T-cells in the mesenteric lymph nodes and spleen (at protein level) (PubMed:23562159).</text>
</comment>
<comment type="developmental stage">
    <text evidence="10 11">Expressed in the yolk sac (at protein level) (PubMed:30413363). Expressed in the mandibular molar tooth mesenchyme at 13.5 dpc (PubMed:27713059).</text>
</comment>
<comment type="disease">
    <text evidence="6">Defects in Tcf7 may allow the formation of epithelial tumors.</text>
</comment>
<comment type="disruption phenotype">
    <text evidence="8 9 11">Aberrant expression of Vgamma2 T-cell receptor in alpha-beta T-cells (PubMed:17218525). Reduced frequency of DN1d cells, a subset of DN1 precursor thymocytes (PubMed:30413363). Decreased number of natural killer receptor-positive lymphoid tissue inducer T-cells (PubMed:23562159). Increased expression of Il17 in Vgamma1.1 and Vgamma2 gamma-delta T-cells (PubMed:23562159). Loss of Lef1 expression in Vgamma1.1 and Vgamma2 gamma-delta T-cells (PubMed:23562159). Loss of Cd27 expression in Il17a expressing gamma-delta T-cells (PubMed:23562159). Double knockout of Sox13 and Tcf7/Tcf1 show a reduced number of DN1d cells (PubMed:30413363).</text>
</comment>
<comment type="similarity">
    <text evidence="14">Belongs to the TCF/LEF family.</text>
</comment>
<reference key="1">
    <citation type="journal article" date="1991" name="J. Exp. Med.">
        <title>Cloning of murine TCF-1, a T cell-specific transcription factor interacting with functional motifs in the CD3-epsilon and T cell receptor alpha enhancers.</title>
        <authorList>
            <person name="Oosterwegel M.A."/>
            <person name="Clevers H."/>
        </authorList>
    </citation>
    <scope>NUCLEOTIDE SEQUENCE [MRNA] (ISOFORM 1)</scope>
    <source>
        <tissue>Thymus</tissue>
    </source>
</reference>
<reference key="2">
    <citation type="journal article" date="1996" name="Mol. Cell. Biol.">
        <title>Extensive alternative splicing and dual promoter usage generate Tcf-1 protein isoforms with differential transcription control properties.</title>
        <authorList>
            <person name="Van de Wetering M."/>
            <person name="Castrop J."/>
            <person name="Korinek V."/>
            <person name="Clevers H."/>
        </authorList>
    </citation>
    <scope>UTILIZATION OF AN UPSTREAM PROMOTER</scope>
    <scope>IDENTIFICATION OF ISOFORM 2</scope>
</reference>
<reference key="3">
    <citation type="journal article" date="1999" name="Science">
        <title>Synergy between tumor suppressor APC and the beta-catenin-Tcf4 target Tcf1.</title>
        <authorList>
            <person name="Roose J."/>
            <person name="Huls G."/>
            <person name="van Beest M."/>
            <person name="Moerer P."/>
            <person name="van der Horn K."/>
            <person name="Goldschmeding R."/>
            <person name="Logtenberg T."/>
            <person name="Clevers H."/>
        </authorList>
    </citation>
    <scope>DISEASE</scope>
</reference>
<reference key="4">
    <citation type="journal article" date="2001" name="Nat. Immunol.">
        <title>The beta-catenin-TCF-1 pathway ensures CD4(+)CD8(+) thymocyte survival.</title>
        <authorList>
            <person name="Ioannidis V."/>
            <person name="Beermann F."/>
            <person name="Clevers H."/>
            <person name="Held W."/>
        </authorList>
    </citation>
    <scope>FUNCTION</scope>
</reference>
<reference key="5">
    <citation type="journal article" date="2007" name="Science">
        <title>Regulation of gammadelta versus alphabeta T lymphocyte differentiation by the transcription factor SOX13.</title>
        <authorList>
            <person name="Melichar H.J."/>
            <person name="Narayan K."/>
            <person name="Der S.D."/>
            <person name="Hiraoka Y."/>
            <person name="Gardiol N."/>
            <person name="Jeannet G."/>
            <person name="Held W."/>
            <person name="Chambers C.A."/>
            <person name="Kang J."/>
        </authorList>
    </citation>
    <scope>FUNCTION</scope>
    <scope>INTERACTION WITH SOX13</scope>
    <scope>TISSUE SPECIFICITY</scope>
    <scope>DISRUPTION PHENOTYPE</scope>
</reference>
<reference key="6">
    <citation type="journal article" date="2013" name="Immunity">
        <title>A network of high-mobility group box transcription factors programs innate interleukin-17 production.</title>
        <authorList>
            <consortium name="Immunological Genome Project Consortium"/>
            <person name="Malhotra N."/>
            <person name="Narayan K."/>
            <person name="Cho O.H."/>
            <person name="Sylvia K.E."/>
            <person name="Yin C."/>
            <person name="Melichar H."/>
            <person name="Rashighi M."/>
            <person name="Lefebvre V."/>
            <person name="Harris J.E."/>
            <person name="Berg L.J."/>
            <person name="Kang J."/>
        </authorList>
    </citation>
    <scope>FUNCTION</scope>
    <scope>TISSUE SPECIFICITY</scope>
    <scope>DISRUPTION PHENOTYPE</scope>
</reference>
<reference key="7">
    <citation type="journal article" date="2016" name="Dev. Biol.">
        <title>Bmp4-Msx1 signaling and Osr2 control tooth organogenesis through antagonistic regulation of secreted Wnt antagonists.</title>
        <authorList>
            <person name="Jia S."/>
            <person name="Kwon H.E."/>
            <person name="Lan Y."/>
            <person name="Zhou J."/>
            <person name="Liu H."/>
            <person name="Jiang R."/>
        </authorList>
    </citation>
    <scope>DEVELOPMENTAL STAGE</scope>
</reference>
<reference key="8">
    <citation type="journal article" date="2018" name="Immunity">
        <title>Interleukin-17-Producing gammadelta T Cells Originate from SOX13+ Progenitors that Are Independent of gammadeltaTCR Signaling.</title>
        <authorList>
            <person name="Spidale N.A."/>
            <person name="Sylvia K."/>
            <person name="Narayan K."/>
            <person name="Miu B."/>
            <person name="Frascoli M."/>
            <person name="Melichar H.J."/>
            <person name="Zhihao W."/>
            <person name="Kisielow J."/>
            <person name="Palin A."/>
            <person name="Serwold T."/>
            <person name="Love P."/>
            <person name="Kobayashi M."/>
            <person name="Yoshimoto M."/>
            <person name="Jain N."/>
            <person name="Kang J."/>
        </authorList>
    </citation>
    <scope>FUNCTION</scope>
    <scope>DEVELOPMENTAL STAGE</scope>
    <scope>DISRUPTION PHENOTYPE</scope>
</reference>
<sequence length="419" mass="45465">MPQLDSGGGGAGRGDDLGAPDELLAFQDEGEEQDDKNRDSPVGPERDLAELKSSLVNESEGAAAGAGVPGPGVRVHGEAEGAPEALGREHTSQRLFPDKLPESLEDGLKAPECTSGMYKETVYSAFNLLMPYPPASGAGQHPQPQPPLHNKPGQPPHGVPQLSPLYEHFSSPHPTPAPADISQKQGVHRPLQTPDLSGFYSLTSGSMGQLPHTVSWPSPPLYPLSPSCGYRQHFPAPTAAPGAPYPRFTHPSLMLGSGVPGHPAAIPHPAIVPSSGKQELQPYDRNLKTQAEPKAEKEAKKPVIKKPLNAFMLYMKEMRAKVIAECTLKESAAINQILGRRWHALSREEQAKYYELARKERQLHMQLYPGWSARDNYGKKKRRSREKHQESTTGGKRNAFGTYPEKAAAPAPFLPMTVL</sequence>
<organism>
    <name type="scientific">Mus musculus</name>
    <name type="common">Mouse</name>
    <dbReference type="NCBI Taxonomy" id="10090"/>
    <lineage>
        <taxon>Eukaryota</taxon>
        <taxon>Metazoa</taxon>
        <taxon>Chordata</taxon>
        <taxon>Craniata</taxon>
        <taxon>Vertebrata</taxon>
        <taxon>Euteleostomi</taxon>
        <taxon>Mammalia</taxon>
        <taxon>Eutheria</taxon>
        <taxon>Euarchontoglires</taxon>
        <taxon>Glires</taxon>
        <taxon>Rodentia</taxon>
        <taxon>Myomorpha</taxon>
        <taxon>Muroidea</taxon>
        <taxon>Muridae</taxon>
        <taxon>Murinae</taxon>
        <taxon>Mus</taxon>
        <taxon>Mus</taxon>
    </lineage>
</organism>
<proteinExistence type="evidence at protein level"/>
<evidence type="ECO:0000250" key="1"/>
<evidence type="ECO:0000250" key="2">
    <source>
        <dbReference type="UniProtKB" id="P36402"/>
    </source>
</evidence>
<evidence type="ECO:0000255" key="3"/>
<evidence type="ECO:0000255" key="4">
    <source>
        <dbReference type="PROSITE-ProRule" id="PRU00267"/>
    </source>
</evidence>
<evidence type="ECO:0000256" key="5">
    <source>
        <dbReference type="SAM" id="MobiDB-lite"/>
    </source>
</evidence>
<evidence type="ECO:0000269" key="6">
    <source>
    </source>
</evidence>
<evidence type="ECO:0000269" key="7">
    <source>
    </source>
</evidence>
<evidence type="ECO:0000269" key="8">
    <source>
    </source>
</evidence>
<evidence type="ECO:0000269" key="9">
    <source>
    </source>
</evidence>
<evidence type="ECO:0000269" key="10">
    <source>
    </source>
</evidence>
<evidence type="ECO:0000269" key="11">
    <source>
    </source>
</evidence>
<evidence type="ECO:0000303" key="12">
    <source>
    </source>
</evidence>
<evidence type="ECO:0000303" key="13">
    <source>
    </source>
</evidence>
<evidence type="ECO:0000305" key="14"/>
<evidence type="ECO:0000312" key="15">
    <source>
        <dbReference type="MGI" id="MGI:98507"/>
    </source>
</evidence>
<dbReference type="EMBL" id="X61385">
    <property type="protein sequence ID" value="CAA43658.1"/>
    <property type="molecule type" value="mRNA"/>
</dbReference>
<dbReference type="CCDS" id="CCDS24670.1">
    <molecule id="Q00417-2"/>
</dbReference>
<dbReference type="PIR" id="JH0401">
    <property type="entry name" value="JH0401"/>
</dbReference>
<dbReference type="RefSeq" id="NP_001300910.1">
    <property type="nucleotide sequence ID" value="NM_001313981.1"/>
</dbReference>
<dbReference type="RefSeq" id="NP_033357.1">
    <molecule id="Q00417-2"/>
    <property type="nucleotide sequence ID" value="NM_009331.5"/>
</dbReference>
<dbReference type="SMR" id="Q00417"/>
<dbReference type="BioGRID" id="204007">
    <property type="interactions" value="1"/>
</dbReference>
<dbReference type="FunCoup" id="Q00417">
    <property type="interactions" value="1258"/>
</dbReference>
<dbReference type="IntAct" id="Q00417">
    <property type="interactions" value="2"/>
</dbReference>
<dbReference type="MINT" id="Q00417"/>
<dbReference type="STRING" id="10090.ENSMUSP00000084055"/>
<dbReference type="GlyGen" id="Q00417">
    <property type="glycosylation" value="1 site"/>
</dbReference>
<dbReference type="iPTMnet" id="Q00417"/>
<dbReference type="PhosphoSitePlus" id="Q00417"/>
<dbReference type="PaxDb" id="10090-ENSMUSP00000084055"/>
<dbReference type="PeptideAtlas" id="Q00417"/>
<dbReference type="ProteomicsDB" id="262970">
    <molecule id="Q00417-1"/>
</dbReference>
<dbReference type="ProteomicsDB" id="262971">
    <molecule id="Q00417-2"/>
</dbReference>
<dbReference type="Antibodypedia" id="14629">
    <property type="antibodies" value="485 antibodies from 36 providers"/>
</dbReference>
<dbReference type="DNASU" id="21414"/>
<dbReference type="Ensembl" id="ENSMUST00000086844.10">
    <molecule id="Q00417-2"/>
    <property type="protein sequence ID" value="ENSMUSP00000084055.4"/>
    <property type="gene ID" value="ENSMUSG00000000782.17"/>
</dbReference>
<dbReference type="GeneID" id="21414"/>
<dbReference type="KEGG" id="mmu:21414"/>
<dbReference type="UCSC" id="uc007ivj.2">
    <molecule id="Q00417-1"/>
    <property type="organism name" value="mouse"/>
</dbReference>
<dbReference type="AGR" id="MGI:98507"/>
<dbReference type="CTD" id="6932"/>
<dbReference type="MGI" id="MGI:98507">
    <property type="gene designation" value="Tcf7"/>
</dbReference>
<dbReference type="VEuPathDB" id="HostDB:ENSMUSG00000000782"/>
<dbReference type="eggNOG" id="KOG3248">
    <property type="taxonomic scope" value="Eukaryota"/>
</dbReference>
<dbReference type="GeneTree" id="ENSGT00940000159831"/>
<dbReference type="HOGENOM" id="CLU_013229_1_1_1"/>
<dbReference type="InParanoid" id="Q00417"/>
<dbReference type="PhylomeDB" id="Q00417"/>
<dbReference type="TreeFam" id="TF318448"/>
<dbReference type="Reactome" id="R-MMU-201722">
    <property type="pathway name" value="Formation of the beta-catenin:TCF transactivating complex"/>
</dbReference>
<dbReference type="Reactome" id="R-MMU-3769402">
    <property type="pathway name" value="Deactivation of the beta-catenin transactivating complex"/>
</dbReference>
<dbReference type="Reactome" id="R-MMU-4086398">
    <property type="pathway name" value="Ca2+ pathway"/>
</dbReference>
<dbReference type="Reactome" id="R-MMU-4641265">
    <property type="pathway name" value="Repression of WNT target genes"/>
</dbReference>
<dbReference type="Reactome" id="R-MMU-8951430">
    <property type="pathway name" value="RUNX3 regulates WNT signaling"/>
</dbReference>
<dbReference type="Reactome" id="R-MMU-9825892">
    <property type="pathway name" value="Regulation of MITF-M-dependent genes involved in cell cycle and proliferation"/>
</dbReference>
<dbReference type="BioGRID-ORCS" id="21414">
    <property type="hits" value="2 hits in 79 CRISPR screens"/>
</dbReference>
<dbReference type="ChiTaRS" id="Tcf7">
    <property type="organism name" value="mouse"/>
</dbReference>
<dbReference type="PRO" id="PR:Q00417"/>
<dbReference type="Proteomes" id="UP000000589">
    <property type="component" value="Chromosome 11"/>
</dbReference>
<dbReference type="RNAct" id="Q00417">
    <property type="molecule type" value="protein"/>
</dbReference>
<dbReference type="Bgee" id="ENSMUSG00000000782">
    <property type="expression patterns" value="Expressed in thymus and 285 other cell types or tissues"/>
</dbReference>
<dbReference type="ExpressionAtlas" id="Q00417">
    <property type="expression patterns" value="baseline and differential"/>
</dbReference>
<dbReference type="GO" id="GO:0000791">
    <property type="term" value="C:euchromatin"/>
    <property type="evidence" value="ECO:0000314"/>
    <property type="project" value="BHF-UCL"/>
</dbReference>
<dbReference type="GO" id="GO:0005654">
    <property type="term" value="C:nucleoplasm"/>
    <property type="evidence" value="ECO:0000304"/>
    <property type="project" value="Reactome"/>
</dbReference>
<dbReference type="GO" id="GO:0005634">
    <property type="term" value="C:nucleus"/>
    <property type="evidence" value="ECO:0000314"/>
    <property type="project" value="UniProtKB"/>
</dbReference>
<dbReference type="GO" id="GO:0003677">
    <property type="term" value="F:DNA binding"/>
    <property type="evidence" value="ECO:0000314"/>
    <property type="project" value="MGI"/>
</dbReference>
<dbReference type="GO" id="GO:0003700">
    <property type="term" value="F:DNA-binding transcription factor activity"/>
    <property type="evidence" value="ECO:0000314"/>
    <property type="project" value="MGI"/>
</dbReference>
<dbReference type="GO" id="GO:0001217">
    <property type="term" value="F:DNA-binding transcription repressor activity"/>
    <property type="evidence" value="ECO:0000315"/>
    <property type="project" value="UniProtKB"/>
</dbReference>
<dbReference type="GO" id="GO:0001227">
    <property type="term" value="F:DNA-binding transcription repressor activity, RNA polymerase II-specific"/>
    <property type="evidence" value="ECO:0000315"/>
    <property type="project" value="BHF-UCL"/>
</dbReference>
<dbReference type="GO" id="GO:0000978">
    <property type="term" value="F:RNA polymerase II cis-regulatory region sequence-specific DNA binding"/>
    <property type="evidence" value="ECO:0000314"/>
    <property type="project" value="BHF-UCL"/>
</dbReference>
<dbReference type="GO" id="GO:0046632">
    <property type="term" value="P:alpha-beta T cell differentiation"/>
    <property type="evidence" value="ECO:0000316"/>
    <property type="project" value="MGI"/>
</dbReference>
<dbReference type="GO" id="GO:0060070">
    <property type="term" value="P:canonical Wnt signaling pathway"/>
    <property type="evidence" value="ECO:0000314"/>
    <property type="project" value="MGI"/>
</dbReference>
<dbReference type="GO" id="GO:0044336">
    <property type="term" value="P:canonical Wnt signaling pathway involved in negative regulation of apoptotic process"/>
    <property type="evidence" value="ECO:0000314"/>
    <property type="project" value="MGI"/>
</dbReference>
<dbReference type="GO" id="GO:0048557">
    <property type="term" value="P:embryonic digestive tract morphogenesis"/>
    <property type="evidence" value="ECO:0000316"/>
    <property type="project" value="MGI"/>
</dbReference>
<dbReference type="GO" id="GO:0030538">
    <property type="term" value="P:embryonic genitalia morphogenesis"/>
    <property type="evidence" value="ECO:0000316"/>
    <property type="project" value="MGI"/>
</dbReference>
<dbReference type="GO" id="GO:0048619">
    <property type="term" value="P:embryonic hindgut morphogenesis"/>
    <property type="evidence" value="ECO:0000316"/>
    <property type="project" value="MGI"/>
</dbReference>
<dbReference type="GO" id="GO:0042492">
    <property type="term" value="P:gamma-delta T cell differentiation"/>
    <property type="evidence" value="ECO:0000315"/>
    <property type="project" value="UniProtKB"/>
</dbReference>
<dbReference type="GO" id="GO:0043066">
    <property type="term" value="P:negative regulation of apoptotic process"/>
    <property type="evidence" value="ECO:0000314"/>
    <property type="project" value="MGI"/>
</dbReference>
<dbReference type="GO" id="GO:0000122">
    <property type="term" value="P:negative regulation of transcription by RNA polymerase II"/>
    <property type="evidence" value="ECO:0000315"/>
    <property type="project" value="BHF-UCL"/>
</dbReference>
<dbReference type="GO" id="GO:0021915">
    <property type="term" value="P:neural tube development"/>
    <property type="evidence" value="ECO:0000316"/>
    <property type="project" value="MGI"/>
</dbReference>
<dbReference type="GO" id="GO:0042127">
    <property type="term" value="P:regulation of cell population proliferation"/>
    <property type="evidence" value="ECO:0000314"/>
    <property type="project" value="MGI"/>
</dbReference>
<dbReference type="GO" id="GO:0006355">
    <property type="term" value="P:regulation of DNA-templated transcription"/>
    <property type="evidence" value="ECO:0000315"/>
    <property type="project" value="UniProtKB"/>
</dbReference>
<dbReference type="GO" id="GO:0045586">
    <property type="term" value="P:regulation of gamma-delta T cell differentiation"/>
    <property type="evidence" value="ECO:0000315"/>
    <property type="project" value="UniProtKB"/>
</dbReference>
<dbReference type="GO" id="GO:0006357">
    <property type="term" value="P:regulation of transcription by RNA polymerase II"/>
    <property type="evidence" value="ECO:0000314"/>
    <property type="project" value="MGI"/>
</dbReference>
<dbReference type="GO" id="GO:0033153">
    <property type="term" value="P:T cell receptor V(D)J recombination"/>
    <property type="evidence" value="ECO:0000316"/>
    <property type="project" value="MGI"/>
</dbReference>
<dbReference type="CDD" id="cd21996">
    <property type="entry name" value="HMG-box_TCF7-like"/>
    <property type="match status" value="1"/>
</dbReference>
<dbReference type="FunFam" id="4.10.900.10:FF:000009">
    <property type="entry name" value="transcription factor 7 isoform X1"/>
    <property type="match status" value="1"/>
</dbReference>
<dbReference type="FunFam" id="1.10.30.10:FF:000001">
    <property type="entry name" value="transcription factor 7 isoform X2"/>
    <property type="match status" value="1"/>
</dbReference>
<dbReference type="Gene3D" id="1.10.30.10">
    <property type="entry name" value="High mobility group box domain"/>
    <property type="match status" value="1"/>
</dbReference>
<dbReference type="Gene3D" id="4.10.900.10">
    <property type="entry name" value="TCF3-CBD (Catenin binding domain)"/>
    <property type="match status" value="1"/>
</dbReference>
<dbReference type="InterPro" id="IPR027397">
    <property type="entry name" value="Catenin-bd_sf"/>
</dbReference>
<dbReference type="InterPro" id="IPR013558">
    <property type="entry name" value="CTNNB1-bd_N"/>
</dbReference>
<dbReference type="InterPro" id="IPR009071">
    <property type="entry name" value="HMG_box_dom"/>
</dbReference>
<dbReference type="InterPro" id="IPR036910">
    <property type="entry name" value="HMG_box_dom_sf"/>
</dbReference>
<dbReference type="InterPro" id="IPR024940">
    <property type="entry name" value="TCF/LEF"/>
</dbReference>
<dbReference type="PANTHER" id="PTHR10373:SF33">
    <property type="entry name" value="TRANSCRIPTION FACTOR 7"/>
    <property type="match status" value="1"/>
</dbReference>
<dbReference type="PANTHER" id="PTHR10373">
    <property type="entry name" value="TRANSCRIPTION FACTOR 7 FAMILY MEMBER"/>
    <property type="match status" value="1"/>
</dbReference>
<dbReference type="Pfam" id="PF08347">
    <property type="entry name" value="CTNNB1_binding"/>
    <property type="match status" value="1"/>
</dbReference>
<dbReference type="Pfam" id="PF00505">
    <property type="entry name" value="HMG_box"/>
    <property type="match status" value="1"/>
</dbReference>
<dbReference type="SMART" id="SM00398">
    <property type="entry name" value="HMG"/>
    <property type="match status" value="1"/>
</dbReference>
<dbReference type="SUPFAM" id="SSF47095">
    <property type="entry name" value="HMG-box"/>
    <property type="match status" value="1"/>
</dbReference>
<dbReference type="PROSITE" id="PS50118">
    <property type="entry name" value="HMG_BOX_2"/>
    <property type="match status" value="1"/>
</dbReference>
<name>TCF7_MOUSE</name>
<keyword id="KW-0010">Activator</keyword>
<keyword id="KW-0877">Alternative promoter usage</keyword>
<keyword id="KW-0238">DNA-binding</keyword>
<keyword id="KW-0539">Nucleus</keyword>
<keyword id="KW-1185">Reference proteome</keyword>
<keyword id="KW-0678">Repressor</keyword>
<keyword id="KW-0804">Transcription</keyword>
<keyword id="KW-0805">Transcription regulation</keyword>
<keyword id="KW-0879">Wnt signaling pathway</keyword>
<feature type="chain" id="PRO_0000048613" description="Transcription factor 7">
    <location>
        <begin position="1"/>
        <end position="419"/>
    </location>
</feature>
<feature type="DNA-binding region" description="HMG box" evidence="4">
    <location>
        <begin position="304"/>
        <end position="372"/>
    </location>
</feature>
<feature type="region of interest" description="Disordered" evidence="5">
    <location>
        <begin position="1"/>
        <end position="111"/>
    </location>
</feature>
<feature type="region of interest" description="CTNNB1-binding" evidence="1">
    <location>
        <begin position="1"/>
        <end position="60"/>
    </location>
</feature>
<feature type="region of interest" description="Disordered" evidence="5">
    <location>
        <begin position="134"/>
        <end position="200"/>
    </location>
</feature>
<feature type="region of interest" description="Disordered" evidence="5">
    <location>
        <begin position="374"/>
        <end position="406"/>
    </location>
</feature>
<feature type="short sequence motif" description="Nuclear localization signal" evidence="3">
    <location>
        <begin position="379"/>
        <end position="385"/>
    </location>
</feature>
<feature type="compositionally biased region" description="Gly residues" evidence="5">
    <location>
        <begin position="1"/>
        <end position="12"/>
    </location>
</feature>
<feature type="compositionally biased region" description="Basic and acidic residues" evidence="5">
    <location>
        <begin position="35"/>
        <end position="50"/>
    </location>
</feature>
<feature type="compositionally biased region" description="Basic and acidic residues" evidence="5">
    <location>
        <begin position="86"/>
        <end position="109"/>
    </location>
</feature>
<feature type="compositionally biased region" description="Pro residues" evidence="5">
    <location>
        <begin position="143"/>
        <end position="158"/>
    </location>
</feature>
<feature type="splice variant" id="VSP_014963" description="In isoform 1." evidence="13">
    <location>
        <begin position="1"/>
        <end position="116"/>
    </location>
</feature>